<comment type="function">
    <text evidence="2 3">Part of a gene cluster involved in the biosynthesis of cremeomycin, a light-sensitive o-diazoquinone with antibacterial and antiproliferative effects (PubMed:26278892, PubMed:26689788). Catalyzes the iterative oxidation of L-aspartic acid to nitrosuccinic acid (2-nitrobutanedioate) via N-hydroxyaspartic acid and nitrososuccinic acid (PubMed:26689788).</text>
</comment>
<comment type="catalytic activity">
    <reaction evidence="3">
        <text>L-aspartate + 3 NADPH + 3 O2 + 2 H(+) = 2-nitrobutanedioate + 3 NADP(+) + 4 H2O</text>
        <dbReference type="Rhea" id="RHEA:69008"/>
        <dbReference type="ChEBI" id="CHEBI:15377"/>
        <dbReference type="ChEBI" id="CHEBI:15378"/>
        <dbReference type="ChEBI" id="CHEBI:15379"/>
        <dbReference type="ChEBI" id="CHEBI:29991"/>
        <dbReference type="ChEBI" id="CHEBI:57783"/>
        <dbReference type="ChEBI" id="CHEBI:58349"/>
        <dbReference type="ChEBI" id="CHEBI:180682"/>
        <dbReference type="EC" id="1.14.13.248"/>
    </reaction>
    <physiologicalReaction direction="left-to-right" evidence="3">
        <dbReference type="Rhea" id="RHEA:69009"/>
    </physiologicalReaction>
</comment>
<comment type="cofactor">
    <cofactor evidence="3">
        <name>FAD</name>
        <dbReference type="ChEBI" id="CHEBI:57692"/>
    </cofactor>
</comment>
<comment type="biophysicochemical properties">
    <kinetics>
        <KM evidence="3">124.8 uM for L-aspartate</KM>
        <KM evidence="3">54.8 uM for NADPH</KM>
        <text evidence="3">kcat is 1.14 sec(-1) with L-aspartate as substrate. kcat is 1.19 sec(-1) with NADPH as substrate.</text>
    </kinetics>
</comment>
<comment type="pathway">
    <text evidence="7 8">Antibiotic biosynthesis.</text>
</comment>
<comment type="similarity">
    <text evidence="6">Belongs to the nitrosuccinic acid synthase family.</text>
</comment>
<gene>
    <name evidence="4" type="primary">creE</name>
</gene>
<name>CREE_STRCM</name>
<dbReference type="EC" id="1.14.13.248" evidence="3"/>
<dbReference type="EMBL" id="KT381192">
    <property type="protein sequence ID" value="ALA99202.1"/>
    <property type="molecule type" value="Genomic_DNA"/>
</dbReference>
<dbReference type="EMBL" id="LC033425">
    <property type="protein sequence ID" value="BAU09302.1"/>
    <property type="molecule type" value="Genomic_DNA"/>
</dbReference>
<dbReference type="RefSeq" id="WP_345228836.1">
    <property type="nucleotide sequence ID" value="NZ_BAAAXE010000015.1"/>
</dbReference>
<dbReference type="SMR" id="A0A0K2JL70"/>
<dbReference type="KEGG" id="ag:ALA99202"/>
<dbReference type="KEGG" id="ag:BAU09302"/>
<dbReference type="BioCyc" id="MetaCyc:MONOMER-21756"/>
<dbReference type="GO" id="GO:0004497">
    <property type="term" value="F:monooxygenase activity"/>
    <property type="evidence" value="ECO:0007669"/>
    <property type="project" value="UniProtKB-KW"/>
</dbReference>
<dbReference type="GO" id="GO:0017000">
    <property type="term" value="P:antibiotic biosynthetic process"/>
    <property type="evidence" value="ECO:0007669"/>
    <property type="project" value="UniProtKB-KW"/>
</dbReference>
<dbReference type="InterPro" id="IPR036188">
    <property type="entry name" value="FAD/NAD-bd_sf"/>
</dbReference>
<dbReference type="InterPro" id="IPR038732">
    <property type="entry name" value="HpyO/CreE_NAD-binding"/>
</dbReference>
<dbReference type="InterPro" id="IPR052189">
    <property type="entry name" value="L-asp_N-monooxygenase_NS-form"/>
</dbReference>
<dbReference type="PANTHER" id="PTHR40254">
    <property type="entry name" value="BLR0577 PROTEIN"/>
    <property type="match status" value="1"/>
</dbReference>
<dbReference type="PANTHER" id="PTHR40254:SF1">
    <property type="entry name" value="BLR0577 PROTEIN"/>
    <property type="match status" value="1"/>
</dbReference>
<dbReference type="Pfam" id="PF13454">
    <property type="entry name" value="NAD_binding_9"/>
    <property type="match status" value="1"/>
</dbReference>
<dbReference type="SUPFAM" id="SSF51905">
    <property type="entry name" value="FAD/NAD(P)-binding domain"/>
    <property type="match status" value="1"/>
</dbReference>
<sequence>MSVRRLTVCIVGAGPRGLSVLERFCAHERKSASHPAVTVHVVDPARPGAGRVWRTGQPRQLLMNTVASQVTVFTDGSVDMAGPVEAGPSLHEWARELAALTPVEELLGGHDDATLAEARALGADSYPTRAFYGCYLEEMFRRVVCGAPAHLEVRVHRSTAVSLADETPGSGGAQSLLLADGTRLAGLDAVVLALGHVRAEEPGAPDPRAAALGLAHFPPANPADLDLSGIAPGTPVLLRGLGLNFFDHMALFTLGRGGAFSRRPHGLRYHPSGLEPRLYAGSRRGVPYHARGENEKGVDGRHTPLLLTPERIAELTGRHREGPGLSFLRTLWPLIAREVECVYYGTLLASRGRAAERDAFVTAYLAGGDDTDRGGVLERFGIGPADRWCWERTASPHPRHGFTGPDGHRRWLLEHLAQDVRRARAGNVSDPHKAALDVLRDLRNEIRLVVDHGGLDGLSHRDDLDGWYTGLNAFLSIGPPASRIEEMAALIEAGVLDVVGPGLEVDIDEADAAFVARSPLVPGRPVRAHVLIEARLPVTDLRRTADPLLRDLLRSGQCRSYRIPAGRAPEGYETGGLEVTRRPYRLVDALGRAHPRRFAFGVPTEAVHWVTAAGARPGVNSVTLGDADAIAHAVASLTPAAAPRLPAYEDPGVRCPSDDRLTEVTA</sequence>
<feature type="chain" id="PRO_0000457469" description="L-aspartate N-monooxygenase (nitrosuccinate-forming)">
    <location>
        <begin position="1"/>
        <end position="666"/>
    </location>
</feature>
<feature type="region of interest" description="Disordered" evidence="1">
    <location>
        <begin position="645"/>
        <end position="666"/>
    </location>
</feature>
<feature type="compositionally biased region" description="Basic and acidic residues" evidence="1">
    <location>
        <begin position="656"/>
        <end position="666"/>
    </location>
</feature>
<keyword id="KW-0045">Antibiotic biosynthesis</keyword>
<keyword id="KW-0503">Monooxygenase</keyword>
<keyword id="KW-0521">NADP</keyword>
<keyword id="KW-0560">Oxidoreductase</keyword>
<accession>A0A0K2JL70</accession>
<reference key="1">
    <citation type="journal article" date="2015" name="ChemBioChem">
        <title>The cremeomycin biosynthetic gene cluster encodes a pathway for diazo formation.</title>
        <authorList>
            <person name="Waldman A.J."/>
            <person name="Pechersky Y."/>
            <person name="Wang P."/>
            <person name="Wang J.X."/>
            <person name="Balskus E.P."/>
        </authorList>
    </citation>
    <scope>NUCLEOTIDE SEQUENCE [GENOMIC DNA]</scope>
    <scope>FUNCTION</scope>
    <source>
        <strain>ATCC 19744 / DSM 40147 / JCM 4362 / NBRC 12760 / NRRL 3241 / INA 815/54</strain>
    </source>
</reference>
<reference key="2">
    <citation type="journal article" date="2016" name="Nat. Chem. Biol.">
        <title>A nitrous acid biosynthetic pathway for diazo group formation in bacteria.</title>
        <authorList>
            <person name="Sugai Y."/>
            <person name="Katsuyama Y."/>
            <person name="Ohnishi Y."/>
        </authorList>
    </citation>
    <scope>NUCLEOTIDE SEQUENCE [GENOMIC DNA]</scope>
    <scope>FUNCTION</scope>
    <scope>CATALYTIC ACTIVITY</scope>
    <scope>COFACTOR</scope>
    <scope>BIOPHYSICOCHEMICAL PROPERTIES</scope>
    <source>
        <strain>ATCC 19744 / DSM 40147 / JCM 4362 / NBRC 12760 / NRRL 3241 / INA 815/54</strain>
    </source>
</reference>
<protein>
    <recommendedName>
        <fullName evidence="6">L-aspartate N-monooxygenase (nitrosuccinate-forming)</fullName>
        <ecNumber evidence="3">1.14.13.248</ecNumber>
    </recommendedName>
    <alternativeName>
        <fullName evidence="5">Nitrosuccinic acid synthase</fullName>
    </alternativeName>
</protein>
<proteinExistence type="evidence at protein level"/>
<evidence type="ECO:0000256" key="1">
    <source>
        <dbReference type="SAM" id="MobiDB-lite"/>
    </source>
</evidence>
<evidence type="ECO:0000269" key="2">
    <source>
    </source>
</evidence>
<evidence type="ECO:0000269" key="3">
    <source>
    </source>
</evidence>
<evidence type="ECO:0000303" key="4">
    <source>
    </source>
</evidence>
<evidence type="ECO:0000303" key="5">
    <source>
    </source>
</evidence>
<evidence type="ECO:0000305" key="6"/>
<evidence type="ECO:0000305" key="7">
    <source>
    </source>
</evidence>
<evidence type="ECO:0000305" key="8">
    <source>
    </source>
</evidence>
<organism>
    <name type="scientific">Streptomyces cremeus</name>
    <dbReference type="NCBI Taxonomy" id="66881"/>
    <lineage>
        <taxon>Bacteria</taxon>
        <taxon>Bacillati</taxon>
        <taxon>Actinomycetota</taxon>
        <taxon>Actinomycetes</taxon>
        <taxon>Kitasatosporales</taxon>
        <taxon>Streptomycetaceae</taxon>
        <taxon>Streptomyces</taxon>
    </lineage>
</organism>